<proteinExistence type="predicted"/>
<sequence length="65" mass="7948">MRFSNCFNKFKFCIGTEKKYSFPICTSTYTSFSLFACIWSIFIHISLNKSFIYQKSWYYSFFQNR</sequence>
<feature type="chain" id="PRO_0000384488" description="Uncharacterized protein ORF65">
    <location>
        <begin position="1"/>
        <end position="65"/>
    </location>
</feature>
<feature type="topological domain" description="Cytoplasmic" evidence="1">
    <location>
        <begin position="1"/>
        <end position="20"/>
    </location>
</feature>
<feature type="transmembrane region" description="Helical" evidence="1">
    <location>
        <begin position="21"/>
        <end position="43"/>
    </location>
</feature>
<feature type="topological domain" description="Extracellular" evidence="1">
    <location>
        <begin position="44"/>
        <end position="65"/>
    </location>
</feature>
<organismHost>
    <name type="scientific">Acidianus sp. F28</name>
    <dbReference type="NCBI Taxonomy" id="315458"/>
</organismHost>
<gene>
    <name type="ORF">ORF65</name>
</gene>
<dbReference type="EMBL" id="AJ854042">
    <property type="protein sequence ID" value="CAH69439.1"/>
    <property type="molecule type" value="Genomic_DNA"/>
</dbReference>
<dbReference type="RefSeq" id="YP_001496977.1">
    <property type="nucleotide sequence ID" value="NC_009884.1"/>
</dbReference>
<dbReference type="KEGG" id="vg:5656067"/>
<dbReference type="Proteomes" id="UP000006364">
    <property type="component" value="Genome"/>
</dbReference>
<dbReference type="GO" id="GO:0033644">
    <property type="term" value="C:host cell membrane"/>
    <property type="evidence" value="ECO:0007669"/>
    <property type="project" value="UniProtKB-SubCell"/>
</dbReference>
<dbReference type="GO" id="GO:0016020">
    <property type="term" value="C:membrane"/>
    <property type="evidence" value="ECO:0007669"/>
    <property type="project" value="UniProtKB-KW"/>
</dbReference>
<accession>Q573B7</accession>
<protein>
    <recommendedName>
        <fullName>Uncharacterized protein ORF65</fullName>
    </recommendedName>
</protein>
<reference key="1">
    <citation type="journal article" date="2005" name="J. Bacteriol.">
        <title>Structure and genome organization of AFV2, a novel archaeal lipothrixvirus with unusual terminal and core structures.</title>
        <authorList>
            <person name="Haring M."/>
            <person name="Vestergaard G."/>
            <person name="Brugger K."/>
            <person name="Rachel R."/>
            <person name="Garrett R.A."/>
            <person name="Prangishvili D."/>
        </authorList>
    </citation>
    <scope>NUCLEOTIDE SEQUENCE [GENOMIC DNA]</scope>
</reference>
<evidence type="ECO:0000255" key="1"/>
<evidence type="ECO:0000305" key="2"/>
<keyword id="KW-1043">Host membrane</keyword>
<keyword id="KW-0472">Membrane</keyword>
<keyword id="KW-1185">Reference proteome</keyword>
<keyword id="KW-0812">Transmembrane</keyword>
<keyword id="KW-1133">Transmembrane helix</keyword>
<organism>
    <name type="scientific">Acidianus filamentous virus 2 (isolate Italy/Pozzuoli)</name>
    <name type="common">AFV-2</name>
    <dbReference type="NCBI Taxonomy" id="654910"/>
    <lineage>
        <taxon>Viruses</taxon>
        <taxon>Adnaviria</taxon>
        <taxon>Zilligvirae</taxon>
        <taxon>Taleaviricota</taxon>
        <taxon>Tokiviricetes</taxon>
        <taxon>Ligamenvirales</taxon>
        <taxon>Lipothrixviridae</taxon>
        <taxon>Deltalipothrixvirus</taxon>
        <taxon>Acidianus filamentous virus 2</taxon>
    </lineage>
</organism>
<comment type="subcellular location">
    <subcellularLocation>
        <location evidence="2">Host membrane</location>
        <topology evidence="2">Single-pass membrane protein</topology>
    </subcellularLocation>
</comment>
<name>Y065_AFV2P</name>